<accession>A1WKA2</accession>
<organism>
    <name type="scientific">Verminephrobacter eiseniae (strain EF01-2)</name>
    <dbReference type="NCBI Taxonomy" id="391735"/>
    <lineage>
        <taxon>Bacteria</taxon>
        <taxon>Pseudomonadati</taxon>
        <taxon>Pseudomonadota</taxon>
        <taxon>Betaproteobacteria</taxon>
        <taxon>Burkholderiales</taxon>
        <taxon>Comamonadaceae</taxon>
        <taxon>Verminephrobacter</taxon>
    </lineage>
</organism>
<proteinExistence type="inferred from homology"/>
<sequence length="131" mass="14178">MSMSDPIADLLTRIRNAQMVAKPTVMVPSSKVKVAIAQVLKDEGYIDGFQVKTEAGKSELEIALKYYAGRPVIERIERVSRPGLRVYKGRDAIPQVMNGLGVAIVTTPKGVMTDRKARATGVGGEVLCYVA</sequence>
<name>RS8_VEREI</name>
<dbReference type="EMBL" id="CP000542">
    <property type="protein sequence ID" value="ABM58059.1"/>
    <property type="molecule type" value="Genomic_DNA"/>
</dbReference>
<dbReference type="RefSeq" id="WP_011810062.1">
    <property type="nucleotide sequence ID" value="NC_008786.1"/>
</dbReference>
<dbReference type="SMR" id="A1WKA2"/>
<dbReference type="STRING" id="391735.Veis_2311"/>
<dbReference type="GeneID" id="76460876"/>
<dbReference type="KEGG" id="vei:Veis_2311"/>
<dbReference type="eggNOG" id="COG0096">
    <property type="taxonomic scope" value="Bacteria"/>
</dbReference>
<dbReference type="HOGENOM" id="CLU_098428_0_0_4"/>
<dbReference type="OrthoDB" id="9802617at2"/>
<dbReference type="Proteomes" id="UP000000374">
    <property type="component" value="Chromosome"/>
</dbReference>
<dbReference type="GO" id="GO:1990904">
    <property type="term" value="C:ribonucleoprotein complex"/>
    <property type="evidence" value="ECO:0007669"/>
    <property type="project" value="UniProtKB-KW"/>
</dbReference>
<dbReference type="GO" id="GO:0005840">
    <property type="term" value="C:ribosome"/>
    <property type="evidence" value="ECO:0007669"/>
    <property type="project" value="UniProtKB-KW"/>
</dbReference>
<dbReference type="GO" id="GO:0019843">
    <property type="term" value="F:rRNA binding"/>
    <property type="evidence" value="ECO:0007669"/>
    <property type="project" value="UniProtKB-UniRule"/>
</dbReference>
<dbReference type="GO" id="GO:0003735">
    <property type="term" value="F:structural constituent of ribosome"/>
    <property type="evidence" value="ECO:0007669"/>
    <property type="project" value="InterPro"/>
</dbReference>
<dbReference type="GO" id="GO:0006412">
    <property type="term" value="P:translation"/>
    <property type="evidence" value="ECO:0007669"/>
    <property type="project" value="UniProtKB-UniRule"/>
</dbReference>
<dbReference type="FunFam" id="3.30.1370.30:FF:000002">
    <property type="entry name" value="30S ribosomal protein S8"/>
    <property type="match status" value="1"/>
</dbReference>
<dbReference type="FunFam" id="3.30.1490.10:FF:000001">
    <property type="entry name" value="30S ribosomal protein S8"/>
    <property type="match status" value="1"/>
</dbReference>
<dbReference type="Gene3D" id="3.30.1370.30">
    <property type="match status" value="1"/>
</dbReference>
<dbReference type="Gene3D" id="3.30.1490.10">
    <property type="match status" value="1"/>
</dbReference>
<dbReference type="HAMAP" id="MF_01302_B">
    <property type="entry name" value="Ribosomal_uS8_B"/>
    <property type="match status" value="1"/>
</dbReference>
<dbReference type="InterPro" id="IPR000630">
    <property type="entry name" value="Ribosomal_uS8"/>
</dbReference>
<dbReference type="InterPro" id="IPR047863">
    <property type="entry name" value="Ribosomal_uS8_CS"/>
</dbReference>
<dbReference type="InterPro" id="IPR035987">
    <property type="entry name" value="Ribosomal_uS8_sf"/>
</dbReference>
<dbReference type="NCBIfam" id="NF001109">
    <property type="entry name" value="PRK00136.1"/>
    <property type="match status" value="1"/>
</dbReference>
<dbReference type="PANTHER" id="PTHR11758">
    <property type="entry name" value="40S RIBOSOMAL PROTEIN S15A"/>
    <property type="match status" value="1"/>
</dbReference>
<dbReference type="Pfam" id="PF00410">
    <property type="entry name" value="Ribosomal_S8"/>
    <property type="match status" value="1"/>
</dbReference>
<dbReference type="SUPFAM" id="SSF56047">
    <property type="entry name" value="Ribosomal protein S8"/>
    <property type="match status" value="1"/>
</dbReference>
<dbReference type="PROSITE" id="PS00053">
    <property type="entry name" value="RIBOSOMAL_S8"/>
    <property type="match status" value="1"/>
</dbReference>
<keyword id="KW-1185">Reference proteome</keyword>
<keyword id="KW-0687">Ribonucleoprotein</keyword>
<keyword id="KW-0689">Ribosomal protein</keyword>
<keyword id="KW-0694">RNA-binding</keyword>
<keyword id="KW-0699">rRNA-binding</keyword>
<feature type="chain" id="PRO_0000290958" description="Small ribosomal subunit protein uS8">
    <location>
        <begin position="1"/>
        <end position="131"/>
    </location>
</feature>
<evidence type="ECO:0000255" key="1">
    <source>
        <dbReference type="HAMAP-Rule" id="MF_01302"/>
    </source>
</evidence>
<evidence type="ECO:0000305" key="2"/>
<comment type="function">
    <text evidence="1">One of the primary rRNA binding proteins, it binds directly to 16S rRNA central domain where it helps coordinate assembly of the platform of the 30S subunit.</text>
</comment>
<comment type="subunit">
    <text evidence="1">Part of the 30S ribosomal subunit. Contacts proteins S5 and S12.</text>
</comment>
<comment type="similarity">
    <text evidence="1">Belongs to the universal ribosomal protein uS8 family.</text>
</comment>
<reference key="1">
    <citation type="submission" date="2006-12" db="EMBL/GenBank/DDBJ databases">
        <title>Complete sequence of chromosome 1 of Verminephrobacter eiseniae EF01-2.</title>
        <authorList>
            <person name="Copeland A."/>
            <person name="Lucas S."/>
            <person name="Lapidus A."/>
            <person name="Barry K."/>
            <person name="Detter J.C."/>
            <person name="Glavina del Rio T."/>
            <person name="Dalin E."/>
            <person name="Tice H."/>
            <person name="Pitluck S."/>
            <person name="Chertkov O."/>
            <person name="Brettin T."/>
            <person name="Bruce D."/>
            <person name="Han C."/>
            <person name="Tapia R."/>
            <person name="Gilna P."/>
            <person name="Schmutz J."/>
            <person name="Larimer F."/>
            <person name="Land M."/>
            <person name="Hauser L."/>
            <person name="Kyrpides N."/>
            <person name="Kim E."/>
            <person name="Stahl D."/>
            <person name="Richardson P."/>
        </authorList>
    </citation>
    <scope>NUCLEOTIDE SEQUENCE [LARGE SCALE GENOMIC DNA]</scope>
    <source>
        <strain>EF01-2</strain>
    </source>
</reference>
<protein>
    <recommendedName>
        <fullName evidence="1">Small ribosomal subunit protein uS8</fullName>
    </recommendedName>
    <alternativeName>
        <fullName evidence="2">30S ribosomal protein S8</fullName>
    </alternativeName>
</protein>
<gene>
    <name evidence="1" type="primary">rpsH</name>
    <name type="ordered locus">Veis_2311</name>
</gene>